<name>PDE11_RAT</name>
<keyword id="KW-0021">Allosteric enzyme</keyword>
<keyword id="KW-0025">Alternative splicing</keyword>
<keyword id="KW-0114">cAMP</keyword>
<keyword id="KW-0140">cGMP</keyword>
<keyword id="KW-0963">Cytoplasm</keyword>
<keyword id="KW-0378">Hydrolase</keyword>
<keyword id="KW-0479">Metal-binding</keyword>
<keyword id="KW-0597">Phosphoprotein</keyword>
<keyword id="KW-1185">Reference proteome</keyword>
<keyword id="KW-0677">Repeat</keyword>
<evidence type="ECO:0000250" key="1">
    <source>
        <dbReference type="UniProtKB" id="O76083"/>
    </source>
</evidence>
<evidence type="ECO:0000250" key="2">
    <source>
        <dbReference type="UniProtKB" id="P0C1Q2"/>
    </source>
</evidence>
<evidence type="ECO:0000250" key="3">
    <source>
        <dbReference type="UniProtKB" id="Q922S4"/>
    </source>
</evidence>
<evidence type="ECO:0000250" key="4">
    <source>
        <dbReference type="UniProtKB" id="Q9HCR9"/>
    </source>
</evidence>
<evidence type="ECO:0000255" key="5">
    <source>
        <dbReference type="PROSITE-ProRule" id="PRU01192"/>
    </source>
</evidence>
<evidence type="ECO:0000256" key="6">
    <source>
        <dbReference type="SAM" id="MobiDB-lite"/>
    </source>
</evidence>
<evidence type="ECO:0000269" key="7">
    <source>
    </source>
</evidence>
<evidence type="ECO:0000303" key="8">
    <source>
    </source>
</evidence>
<evidence type="ECO:0000305" key="9"/>
<evidence type="ECO:0000312" key="10">
    <source>
        <dbReference type="RGD" id="621793"/>
    </source>
</evidence>
<reference key="1">
    <citation type="journal article" date="2001" name="Eur. J. Biochem.">
        <title>Identification of rat cyclic nucleotide phosphodiesterase 11A (PDE11A): comparison of rat and human PDE11A splicing variants.</title>
        <authorList>
            <person name="Yuasa K."/>
            <person name="Ohgaru T."/>
            <person name="Asahina M."/>
            <person name="Omori K."/>
        </authorList>
    </citation>
    <scope>NUCLEOTIDE SEQUENCE [MRNA] (ISOFORMS 1; 2 AND 3)</scope>
    <scope>FUNCTION</scope>
    <scope>CATALYTIC ACTIVITY</scope>
    <scope>BIOPHYSICOCHEMICAL PROPERTIES</scope>
    <scope>ACTIVITY REGULATION</scope>
    <scope>TISSUE SPECIFICITY</scope>
</reference>
<feature type="chain" id="PRO_0000247042" description="Dual 3',5'-cyclic-AMP and -GMP phosphodiesterase 11A">
    <location>
        <begin position="1"/>
        <end position="935"/>
    </location>
</feature>
<feature type="domain" description="GAF 1">
    <location>
        <begin position="217"/>
        <end position="370"/>
    </location>
</feature>
<feature type="domain" description="GAF 2">
    <location>
        <begin position="402"/>
        <end position="558"/>
    </location>
</feature>
<feature type="domain" description="PDEase" evidence="5">
    <location>
        <begin position="588"/>
        <end position="912"/>
    </location>
</feature>
<feature type="region of interest" description="Disordered" evidence="6">
    <location>
        <begin position="41"/>
        <end position="125"/>
    </location>
</feature>
<feature type="region of interest" description="Disordered" evidence="6">
    <location>
        <begin position="915"/>
        <end position="935"/>
    </location>
</feature>
<feature type="compositionally biased region" description="Low complexity" evidence="6">
    <location>
        <begin position="54"/>
        <end position="69"/>
    </location>
</feature>
<feature type="active site" description="Proton donor" evidence="1">
    <location>
        <position position="664"/>
    </location>
</feature>
<feature type="binding site" evidence="3">
    <location>
        <position position="424"/>
    </location>
    <ligand>
        <name>3',5'-cyclic GMP</name>
        <dbReference type="ChEBI" id="CHEBI:57746"/>
    </ligand>
</feature>
<feature type="binding site" evidence="5">
    <location>
        <position position="668"/>
    </location>
    <ligand>
        <name>a divalent metal cation</name>
        <dbReference type="ChEBI" id="CHEBI:60240"/>
        <label>1</label>
    </ligand>
</feature>
<feature type="binding site" evidence="5">
    <location>
        <position position="704"/>
    </location>
    <ligand>
        <name>a divalent metal cation</name>
        <dbReference type="ChEBI" id="CHEBI:60240"/>
        <label>1</label>
    </ligand>
</feature>
<feature type="binding site" evidence="5">
    <location>
        <position position="705"/>
    </location>
    <ligand>
        <name>a divalent metal cation</name>
        <dbReference type="ChEBI" id="CHEBI:60240"/>
        <label>1</label>
    </ligand>
</feature>
<feature type="binding site" evidence="5">
    <location>
        <position position="705"/>
    </location>
    <ligand>
        <name>a divalent metal cation</name>
        <dbReference type="ChEBI" id="CHEBI:60240"/>
        <label>2</label>
    </ligand>
</feature>
<feature type="binding site" evidence="5">
    <location>
        <position position="816"/>
    </location>
    <ligand>
        <name>a divalent metal cation</name>
        <dbReference type="ChEBI" id="CHEBI:60240"/>
        <label>1</label>
    </ligand>
</feature>
<feature type="modified residue" description="Phosphoserine" evidence="2">
    <location>
        <position position="162"/>
    </location>
</feature>
<feature type="modified residue" description="Phosphoserine" evidence="2">
    <location>
        <position position="163"/>
    </location>
</feature>
<feature type="modified residue" description="Phosphoserine" evidence="4">
    <location>
        <position position="239"/>
    </location>
</feature>
<feature type="splice variant" id="VSP_019902" description="In isoform 3." evidence="8">
    <location>
        <begin position="1"/>
        <end position="354"/>
    </location>
</feature>
<feature type="splice variant" id="VSP_019903" description="In isoform 2." evidence="8">
    <location>
        <begin position="1"/>
        <end position="250"/>
    </location>
</feature>
<feature type="splice variant" id="VSP_019904" description="In isoform 2." evidence="8">
    <original>KTLVSKFFDVHAGTPLLPCSTTENSNEVQVPWGKGIIGYVGEHGETVNIPDAYQ</original>
    <variation>MLKQARRFSFRNVRSATQWRKVGSTRQGQISGAFLAERLDKHQDFLTRMQTRTK</variation>
    <location>
        <begin position="251"/>
        <end position="304"/>
    </location>
</feature>
<feature type="splice variant" id="VSP_019905" description="In isoform 3." evidence="8">
    <original>DEK</original>
    <variation>MSW</variation>
    <location>
        <begin position="355"/>
        <end position="357"/>
    </location>
</feature>
<comment type="function">
    <text evidence="7">Plays a role in signal transduction by regulating the intracellular concentration of cyclic nucleotides cAMP and cGMP (PubMed:11502204). Catalyzes the hydrolysis of both cAMP and cGMP to 5'-AMP and 5'-GMP, respectively (PubMed:11502204).</text>
</comment>
<comment type="catalytic activity">
    <reaction evidence="7">
        <text>3',5'-cyclic GMP + H2O = GMP + H(+)</text>
        <dbReference type="Rhea" id="RHEA:16957"/>
        <dbReference type="ChEBI" id="CHEBI:15377"/>
        <dbReference type="ChEBI" id="CHEBI:15378"/>
        <dbReference type="ChEBI" id="CHEBI:57746"/>
        <dbReference type="ChEBI" id="CHEBI:58115"/>
        <dbReference type="EC" id="3.1.4.35"/>
    </reaction>
</comment>
<comment type="catalytic activity">
    <reaction evidence="7">
        <text>3',5'-cyclic AMP + H2O = AMP + H(+)</text>
        <dbReference type="Rhea" id="RHEA:25277"/>
        <dbReference type="ChEBI" id="CHEBI:15377"/>
        <dbReference type="ChEBI" id="CHEBI:15378"/>
        <dbReference type="ChEBI" id="CHEBI:58165"/>
        <dbReference type="ChEBI" id="CHEBI:456215"/>
        <dbReference type="EC" id="3.1.4.53"/>
    </reaction>
</comment>
<comment type="cofactor">
    <cofactor evidence="1">
        <name>a divalent metal cation</name>
        <dbReference type="ChEBI" id="CHEBI:60240"/>
    </cofactor>
    <text evidence="1">Binds 2 divalent metal cations per subunit. Site 1 may preferentially bind zinc ions, while site 2 has a preference for magnesium and/or manganese ions.</text>
</comment>
<comment type="activity regulation">
    <text evidence="7">Inhibited by 3-isobutyl-1-methylxanthine (IBMX), zaprinast and dipyridamole. cGMP acts as an allosteric activator.</text>
</comment>
<comment type="biophysicochemical properties">
    <kinetics>
        <KM evidence="7">3.9 uM for cAMP (isoform 1)</KM>
        <KM evidence="7">1.6 uM for cGMP (isoform 1)</KM>
        <KM evidence="7">4 uM for cAMP (isoform 2)</KM>
        <KM evidence="7">1.6 uM for cGMP (isoform 2)</KM>
        <KM evidence="7">2.2 uM for cAMP (isoform 3)</KM>
        <KM evidence="7">1.3 uM for cGMP (isoform 3)</KM>
    </kinetics>
</comment>
<comment type="subcellular location">
    <subcellularLocation>
        <location evidence="4">Cytoplasm</location>
        <location evidence="4">Cytosol</location>
    </subcellularLocation>
</comment>
<comment type="alternative products">
    <event type="alternative splicing"/>
    <isoform>
        <id>Q8VID6-1</id>
        <name>1</name>
        <name evidence="8">PDE11A4</name>
        <sequence type="displayed"/>
    </isoform>
    <isoform>
        <id>Q8VID6-2</id>
        <name>2</name>
        <name evidence="8">PDE11A3</name>
        <sequence type="described" ref="VSP_019903 VSP_019904"/>
    </isoform>
    <isoform>
        <id>Q8VID6-3</id>
        <name>3</name>
        <name evidence="8">PDE11A2</name>
        <sequence type="described" ref="VSP_019902 VSP_019905"/>
    </isoform>
</comment>
<comment type="tissue specificity">
    <text evidence="7">Isoform 1 is expressed in brain, heart, kidney and liver, but not in prostate. Isoform 2 is specifically expressed in testis. Isoform 3 is expressed in various tissues including brain, lung, skeletal muscle, spleen, testis and prostate.</text>
</comment>
<comment type="domain">
    <text evidence="4">The tandem GAF domains bind cGMP, and regulate enzyme activity. The binding of cGMP stimulates enzyme activity.</text>
</comment>
<comment type="similarity">
    <text evidence="9">Belongs to the cyclic nucleotide phosphodiesterase family.</text>
</comment>
<dbReference type="EC" id="3.1.4.35" evidence="7"/>
<dbReference type="EC" id="3.1.4.53" evidence="7"/>
<dbReference type="EMBL" id="AB059360">
    <property type="protein sequence ID" value="BAB79627.1"/>
    <property type="molecule type" value="mRNA"/>
</dbReference>
<dbReference type="EMBL" id="AB059361">
    <property type="protein sequence ID" value="BAB79628.1"/>
    <property type="molecule type" value="mRNA"/>
</dbReference>
<dbReference type="EMBL" id="AB059362">
    <property type="protein sequence ID" value="BAB79629.1"/>
    <property type="molecule type" value="mRNA"/>
</dbReference>
<dbReference type="RefSeq" id="NP_001120952.1">
    <molecule id="Q8VID6-2"/>
    <property type="nucleotide sequence ID" value="NM_001127480.2"/>
</dbReference>
<dbReference type="RefSeq" id="NP_001120953.1">
    <molecule id="Q8VID6-3"/>
    <property type="nucleotide sequence ID" value="NM_001127481.3"/>
</dbReference>
<dbReference type="RefSeq" id="NP_543169.1">
    <molecule id="Q8VID6-1"/>
    <property type="nucleotide sequence ID" value="NM_080893.2"/>
</dbReference>
<dbReference type="SMR" id="Q8VID6"/>
<dbReference type="BioGRID" id="250862">
    <property type="interactions" value="1"/>
</dbReference>
<dbReference type="FunCoup" id="Q8VID6">
    <property type="interactions" value="518"/>
</dbReference>
<dbReference type="STRING" id="10116.ENSRNOP00000008300"/>
<dbReference type="iPTMnet" id="Q8VID6"/>
<dbReference type="PhosphoSitePlus" id="Q8VID6"/>
<dbReference type="PaxDb" id="10116-ENSRNOP00000008300"/>
<dbReference type="Ensembl" id="ENSRNOT00000045862.3">
    <molecule id="Q8VID6-3"/>
    <property type="protein sequence ID" value="ENSRNOP00000048657.2"/>
    <property type="gene ID" value="ENSRNOG00000024457.7"/>
</dbReference>
<dbReference type="Ensembl" id="ENSRNOT00000050355.4">
    <molecule id="Q8VID6-2"/>
    <property type="protein sequence ID" value="ENSRNOP00000051289.1"/>
    <property type="gene ID" value="ENSRNOG00000024457.7"/>
</dbReference>
<dbReference type="GeneID" id="140928"/>
<dbReference type="KEGG" id="rno:140928"/>
<dbReference type="AGR" id="RGD:621793"/>
<dbReference type="CTD" id="50940"/>
<dbReference type="RGD" id="621793">
    <property type="gene designation" value="Pde11a"/>
</dbReference>
<dbReference type="VEuPathDB" id="HostDB:ENSRNOG00000024457"/>
<dbReference type="eggNOG" id="KOG3689">
    <property type="taxonomic scope" value="Eukaryota"/>
</dbReference>
<dbReference type="GeneTree" id="ENSGT00940000162151"/>
<dbReference type="HOGENOM" id="CLU_006980_0_1_1"/>
<dbReference type="InParanoid" id="Q8VID6"/>
<dbReference type="OrthoDB" id="21332at9989"/>
<dbReference type="PhylomeDB" id="Q8VID6"/>
<dbReference type="TreeFam" id="TF316499"/>
<dbReference type="Reactome" id="R-RNO-418457">
    <property type="pathway name" value="cGMP effects"/>
</dbReference>
<dbReference type="Reactome" id="R-RNO-418555">
    <property type="pathway name" value="G alpha (s) signalling events"/>
</dbReference>
<dbReference type="SABIO-RK" id="Q8VID6"/>
<dbReference type="PRO" id="PR:Q8VID6"/>
<dbReference type="Proteomes" id="UP000002494">
    <property type="component" value="Chromosome 3"/>
</dbReference>
<dbReference type="Bgee" id="ENSRNOG00000024457">
    <property type="expression patterns" value="Expressed in testis and 8 other cell types or tissues"/>
</dbReference>
<dbReference type="ExpressionAtlas" id="Q8VID6">
    <property type="expression patterns" value="baseline and differential"/>
</dbReference>
<dbReference type="GO" id="GO:0005829">
    <property type="term" value="C:cytosol"/>
    <property type="evidence" value="ECO:0007669"/>
    <property type="project" value="UniProtKB-SubCell"/>
</dbReference>
<dbReference type="GO" id="GO:0043204">
    <property type="term" value="C:perikaryon"/>
    <property type="evidence" value="ECO:0000314"/>
    <property type="project" value="RGD"/>
</dbReference>
<dbReference type="GO" id="GO:0004118">
    <property type="term" value="F:3',5'-cGMP-stimulated cyclic-nucleotide phosphodiesterase activity"/>
    <property type="evidence" value="ECO:0000250"/>
    <property type="project" value="UniProtKB"/>
</dbReference>
<dbReference type="GO" id="GO:0004115">
    <property type="term" value="F:3',5'-cyclic-AMP phosphodiesterase activity"/>
    <property type="evidence" value="ECO:0000318"/>
    <property type="project" value="GO_Central"/>
</dbReference>
<dbReference type="GO" id="GO:0047555">
    <property type="term" value="F:3',5'-cyclic-GMP phosphodiesterase activity"/>
    <property type="evidence" value="ECO:0000318"/>
    <property type="project" value="GO_Central"/>
</dbReference>
<dbReference type="GO" id="GO:0030553">
    <property type="term" value="F:cGMP binding"/>
    <property type="evidence" value="ECO:0000266"/>
    <property type="project" value="RGD"/>
</dbReference>
<dbReference type="GO" id="GO:0046872">
    <property type="term" value="F:metal ion binding"/>
    <property type="evidence" value="ECO:0007669"/>
    <property type="project" value="UniProtKB-KW"/>
</dbReference>
<dbReference type="GO" id="GO:0019933">
    <property type="term" value="P:cAMP-mediated signaling"/>
    <property type="evidence" value="ECO:0000318"/>
    <property type="project" value="GO_Central"/>
</dbReference>
<dbReference type="GO" id="GO:0141162">
    <property type="term" value="P:negative regulation of cAMP/PKA signal transduction"/>
    <property type="evidence" value="ECO:0000314"/>
    <property type="project" value="RGD"/>
</dbReference>
<dbReference type="GO" id="GO:0010754">
    <property type="term" value="P:negative regulation of cGMP-mediated signaling"/>
    <property type="evidence" value="ECO:0000314"/>
    <property type="project" value="RGD"/>
</dbReference>
<dbReference type="CDD" id="cd00077">
    <property type="entry name" value="HDc"/>
    <property type="match status" value="1"/>
</dbReference>
<dbReference type="FunFam" id="1.10.1300.10:FF:000003">
    <property type="entry name" value="Phosphodiesterase"/>
    <property type="match status" value="1"/>
</dbReference>
<dbReference type="FunFam" id="3.30.450.40:FF:000004">
    <property type="entry name" value="Phosphodiesterase"/>
    <property type="match status" value="1"/>
</dbReference>
<dbReference type="FunFam" id="3.30.450.40:FF:000018">
    <property type="entry name" value="Phosphodiesterase"/>
    <property type="match status" value="1"/>
</dbReference>
<dbReference type="Gene3D" id="3.30.450.40">
    <property type="match status" value="2"/>
</dbReference>
<dbReference type="Gene3D" id="1.10.1300.10">
    <property type="entry name" value="3'5'-cyclic nucleotide phosphodiesterase, catalytic domain"/>
    <property type="match status" value="1"/>
</dbReference>
<dbReference type="InterPro" id="IPR003018">
    <property type="entry name" value="GAF"/>
</dbReference>
<dbReference type="InterPro" id="IPR029016">
    <property type="entry name" value="GAF-like_dom_sf"/>
</dbReference>
<dbReference type="InterPro" id="IPR003607">
    <property type="entry name" value="HD/PDEase_dom"/>
</dbReference>
<dbReference type="InterPro" id="IPR023088">
    <property type="entry name" value="PDEase"/>
</dbReference>
<dbReference type="InterPro" id="IPR002073">
    <property type="entry name" value="PDEase_catalytic_dom"/>
</dbReference>
<dbReference type="InterPro" id="IPR036971">
    <property type="entry name" value="PDEase_catalytic_dom_sf"/>
</dbReference>
<dbReference type="InterPro" id="IPR023174">
    <property type="entry name" value="PDEase_CS"/>
</dbReference>
<dbReference type="PANTHER" id="PTHR11347">
    <property type="entry name" value="CYCLIC NUCLEOTIDE PHOSPHODIESTERASE"/>
    <property type="match status" value="1"/>
</dbReference>
<dbReference type="Pfam" id="PF01590">
    <property type="entry name" value="GAF"/>
    <property type="match status" value="2"/>
</dbReference>
<dbReference type="Pfam" id="PF00233">
    <property type="entry name" value="PDEase_I"/>
    <property type="match status" value="1"/>
</dbReference>
<dbReference type="PRINTS" id="PR00387">
    <property type="entry name" value="PDIESTERASE1"/>
</dbReference>
<dbReference type="SMART" id="SM00065">
    <property type="entry name" value="GAF"/>
    <property type="match status" value="2"/>
</dbReference>
<dbReference type="SMART" id="SM00471">
    <property type="entry name" value="HDc"/>
    <property type="match status" value="1"/>
</dbReference>
<dbReference type="SUPFAM" id="SSF55781">
    <property type="entry name" value="GAF domain-like"/>
    <property type="match status" value="2"/>
</dbReference>
<dbReference type="SUPFAM" id="SSF109604">
    <property type="entry name" value="HD-domain/PDEase-like"/>
    <property type="match status" value="1"/>
</dbReference>
<dbReference type="PROSITE" id="PS00126">
    <property type="entry name" value="PDEASE_I_1"/>
    <property type="match status" value="1"/>
</dbReference>
<dbReference type="PROSITE" id="PS51845">
    <property type="entry name" value="PDEASE_I_2"/>
    <property type="match status" value="1"/>
</dbReference>
<accession>Q8VID6</accession>
<accession>Q8VID7</accession>
<accession>Q8VID8</accession>
<protein>
    <recommendedName>
        <fullName>Dual 3',5'-cyclic-AMP and -GMP phosphodiesterase 11A</fullName>
        <ecNumber evidence="7">3.1.4.35</ecNumber>
        <ecNumber evidence="7">3.1.4.53</ecNumber>
    </recommendedName>
    <alternativeName>
        <fullName evidence="8">cAMP and cGMP phosphodiesterase 11A</fullName>
    </alternativeName>
</protein>
<gene>
    <name evidence="8 10" type="primary">Pde11a</name>
</gene>
<proteinExistence type="evidence at protein level"/>
<sequence length="935" mass="104571">MAASRLDFGEVETFLDRHPELFEDYLMRKGKQELVDKWLQRHSSGQGASDLRPALAGASSLAQSSARGSTGIGGGAGPQGSANSHPASGGGESAGVPLSPSWASGSRGDGNLQRRASQKELRKSFARSKAIHVNRTYDEQVTSRAQEPLSSVRRRALLRKASSLPPTTAHILSALLESRVNLPQYPPTAIDYKCHLKKHNERQFFLELVKDISNDLDLTSLSYKILIFVCLMVDADRCSLFLVEGAAAGKKTLVSKFFDVHAGTPLLPCSTTENSNEVQVPWGKGIIGYVGEHGETVNIPDAYQDRRFNDEIDKLTGYKTKSLLCMPIRNSDGEIIGVAQAINKVPEGAPFTEDDEKVMQMYLPFCGIAISNAQLFAASRKEYERSRALLEVVNDLFEEQTDLEKIVKKIMHRAQTLLKCERCSVLLLEDIESPVVKFTKSFELMSPKCSADAENSFKESVEKSSYSDWLINNSIAELVASTGLPVNVSDAYQDPRFDAEADQISGFHIRSVLCVPIWNSNHQIIGVAQVLNRLDGKPFDDADQRLFEAFVIFCGLGINNTIMYDQVKKSWAKQSVALDVLSYHATCSKAEVDKFKAANIPLVSELAIDDIHFDDFSLDVDAMITAALRMFMELGMVQKFKIDYETLCRWLLTVRKNYRMVLYHNWRHAFNVCQLMFAMLTTAGFQEILTEVEILAVIVGCLCHDLDHRGTNNAFQAKSDSALAQLYGTSATLEHHHFNHAVMILQSEGHNIFANLSSKEYSDLMQLLKQSILATDLTLYFERRTEFFELVSKGAYDWSITSHRDVFRSMLMTACDLGAVTKPWEISRQVAELVTSEFFEQGDRERSELKLTPSAIFDRNRKDELPRLQLEWIDSICMPLYQALVKVNAKLKPMLDSVAANRRKWEELHQKRLQVSAASPVPSSPSPAVAGEDRL</sequence>
<organism>
    <name type="scientific">Rattus norvegicus</name>
    <name type="common">Rat</name>
    <dbReference type="NCBI Taxonomy" id="10116"/>
    <lineage>
        <taxon>Eukaryota</taxon>
        <taxon>Metazoa</taxon>
        <taxon>Chordata</taxon>
        <taxon>Craniata</taxon>
        <taxon>Vertebrata</taxon>
        <taxon>Euteleostomi</taxon>
        <taxon>Mammalia</taxon>
        <taxon>Eutheria</taxon>
        <taxon>Euarchontoglires</taxon>
        <taxon>Glires</taxon>
        <taxon>Rodentia</taxon>
        <taxon>Myomorpha</taxon>
        <taxon>Muroidea</taxon>
        <taxon>Muridae</taxon>
        <taxon>Murinae</taxon>
        <taxon>Rattus</taxon>
    </lineage>
</organism>